<dbReference type="EC" id="6.3.3.1" evidence="1"/>
<dbReference type="EMBL" id="CP000812">
    <property type="protein sequence ID" value="ABV34465.1"/>
    <property type="molecule type" value="Genomic_DNA"/>
</dbReference>
<dbReference type="RefSeq" id="WP_012003941.1">
    <property type="nucleotide sequence ID" value="NC_009828.1"/>
</dbReference>
<dbReference type="SMR" id="A8F8I1"/>
<dbReference type="STRING" id="416591.Tlet_1911"/>
<dbReference type="KEGG" id="tle:Tlet_1911"/>
<dbReference type="eggNOG" id="COG0150">
    <property type="taxonomic scope" value="Bacteria"/>
</dbReference>
<dbReference type="HOGENOM" id="CLU_047116_0_0_0"/>
<dbReference type="OrthoDB" id="9802507at2"/>
<dbReference type="UniPathway" id="UPA00074">
    <property type="reaction ID" value="UER00129"/>
</dbReference>
<dbReference type="Proteomes" id="UP000002016">
    <property type="component" value="Chromosome"/>
</dbReference>
<dbReference type="GO" id="GO:0005829">
    <property type="term" value="C:cytosol"/>
    <property type="evidence" value="ECO:0007669"/>
    <property type="project" value="TreeGrafter"/>
</dbReference>
<dbReference type="GO" id="GO:0005524">
    <property type="term" value="F:ATP binding"/>
    <property type="evidence" value="ECO:0007669"/>
    <property type="project" value="UniProtKB-KW"/>
</dbReference>
<dbReference type="GO" id="GO:0004637">
    <property type="term" value="F:phosphoribosylamine-glycine ligase activity"/>
    <property type="evidence" value="ECO:0007669"/>
    <property type="project" value="TreeGrafter"/>
</dbReference>
<dbReference type="GO" id="GO:0004641">
    <property type="term" value="F:phosphoribosylformylglycinamidine cyclo-ligase activity"/>
    <property type="evidence" value="ECO:0007669"/>
    <property type="project" value="UniProtKB-UniRule"/>
</dbReference>
<dbReference type="GO" id="GO:0006189">
    <property type="term" value="P:'de novo' IMP biosynthetic process"/>
    <property type="evidence" value="ECO:0007669"/>
    <property type="project" value="UniProtKB-UniRule"/>
</dbReference>
<dbReference type="GO" id="GO:0046084">
    <property type="term" value="P:adenine biosynthetic process"/>
    <property type="evidence" value="ECO:0007669"/>
    <property type="project" value="TreeGrafter"/>
</dbReference>
<dbReference type="CDD" id="cd02196">
    <property type="entry name" value="PurM"/>
    <property type="match status" value="1"/>
</dbReference>
<dbReference type="FunFam" id="3.30.1330.10:FF:000001">
    <property type="entry name" value="Phosphoribosylformylglycinamidine cyclo-ligase"/>
    <property type="match status" value="1"/>
</dbReference>
<dbReference type="FunFam" id="3.90.650.10:FF:000001">
    <property type="entry name" value="Phosphoribosylformylglycinamidine cyclo-ligase"/>
    <property type="match status" value="1"/>
</dbReference>
<dbReference type="Gene3D" id="3.90.650.10">
    <property type="entry name" value="PurM-like C-terminal domain"/>
    <property type="match status" value="1"/>
</dbReference>
<dbReference type="Gene3D" id="3.30.1330.10">
    <property type="entry name" value="PurM-like, N-terminal domain"/>
    <property type="match status" value="1"/>
</dbReference>
<dbReference type="HAMAP" id="MF_00741">
    <property type="entry name" value="AIRS"/>
    <property type="match status" value="1"/>
</dbReference>
<dbReference type="InterPro" id="IPR010918">
    <property type="entry name" value="PurM-like_C_dom"/>
</dbReference>
<dbReference type="InterPro" id="IPR036676">
    <property type="entry name" value="PurM-like_C_sf"/>
</dbReference>
<dbReference type="InterPro" id="IPR016188">
    <property type="entry name" value="PurM-like_N"/>
</dbReference>
<dbReference type="InterPro" id="IPR036921">
    <property type="entry name" value="PurM-like_N_sf"/>
</dbReference>
<dbReference type="InterPro" id="IPR004733">
    <property type="entry name" value="PurM_cligase"/>
</dbReference>
<dbReference type="NCBIfam" id="TIGR00878">
    <property type="entry name" value="purM"/>
    <property type="match status" value="1"/>
</dbReference>
<dbReference type="PANTHER" id="PTHR10520:SF12">
    <property type="entry name" value="TRIFUNCTIONAL PURINE BIOSYNTHETIC PROTEIN ADENOSINE-3"/>
    <property type="match status" value="1"/>
</dbReference>
<dbReference type="PANTHER" id="PTHR10520">
    <property type="entry name" value="TRIFUNCTIONAL PURINE BIOSYNTHETIC PROTEIN ADENOSINE-3-RELATED"/>
    <property type="match status" value="1"/>
</dbReference>
<dbReference type="Pfam" id="PF00586">
    <property type="entry name" value="AIRS"/>
    <property type="match status" value="1"/>
</dbReference>
<dbReference type="Pfam" id="PF02769">
    <property type="entry name" value="AIRS_C"/>
    <property type="match status" value="1"/>
</dbReference>
<dbReference type="SUPFAM" id="SSF56042">
    <property type="entry name" value="PurM C-terminal domain-like"/>
    <property type="match status" value="1"/>
</dbReference>
<dbReference type="SUPFAM" id="SSF55326">
    <property type="entry name" value="PurM N-terminal domain-like"/>
    <property type="match status" value="1"/>
</dbReference>
<comment type="catalytic activity">
    <reaction evidence="1">
        <text>2-formamido-N(1)-(5-O-phospho-beta-D-ribosyl)acetamidine + ATP = 5-amino-1-(5-phospho-beta-D-ribosyl)imidazole + ADP + phosphate + H(+)</text>
        <dbReference type="Rhea" id="RHEA:23032"/>
        <dbReference type="ChEBI" id="CHEBI:15378"/>
        <dbReference type="ChEBI" id="CHEBI:30616"/>
        <dbReference type="ChEBI" id="CHEBI:43474"/>
        <dbReference type="ChEBI" id="CHEBI:137981"/>
        <dbReference type="ChEBI" id="CHEBI:147287"/>
        <dbReference type="ChEBI" id="CHEBI:456216"/>
        <dbReference type="EC" id="6.3.3.1"/>
    </reaction>
</comment>
<comment type="pathway">
    <text evidence="1">Purine metabolism; IMP biosynthesis via de novo pathway; 5-amino-1-(5-phospho-D-ribosyl)imidazole from N(2)-formyl-N(1)-(5-phospho-D-ribosyl)glycinamide: step 2/2.</text>
</comment>
<comment type="subcellular location">
    <subcellularLocation>
        <location evidence="1">Cytoplasm</location>
    </subcellularLocation>
</comment>
<comment type="similarity">
    <text evidence="1">Belongs to the AIR synthase family.</text>
</comment>
<keyword id="KW-0067">ATP-binding</keyword>
<keyword id="KW-0963">Cytoplasm</keyword>
<keyword id="KW-0436">Ligase</keyword>
<keyword id="KW-0547">Nucleotide-binding</keyword>
<keyword id="KW-0658">Purine biosynthesis</keyword>
<keyword id="KW-1185">Reference proteome</keyword>
<evidence type="ECO:0000255" key="1">
    <source>
        <dbReference type="HAMAP-Rule" id="MF_00741"/>
    </source>
</evidence>
<proteinExistence type="inferred from homology"/>
<organism>
    <name type="scientific">Pseudothermotoga lettingae (strain ATCC BAA-301 / DSM 14385 / NBRC 107922 / TMO)</name>
    <name type="common">Thermotoga lettingae</name>
    <dbReference type="NCBI Taxonomy" id="416591"/>
    <lineage>
        <taxon>Bacteria</taxon>
        <taxon>Thermotogati</taxon>
        <taxon>Thermotogota</taxon>
        <taxon>Thermotogae</taxon>
        <taxon>Thermotogales</taxon>
        <taxon>Thermotogaceae</taxon>
        <taxon>Pseudothermotoga</taxon>
    </lineage>
</organism>
<protein>
    <recommendedName>
        <fullName evidence="1">Phosphoribosylformylglycinamidine cyclo-ligase</fullName>
        <ecNumber evidence="1">6.3.3.1</ecNumber>
    </recommendedName>
    <alternativeName>
        <fullName evidence="1">AIR synthase</fullName>
    </alternativeName>
    <alternativeName>
        <fullName evidence="1">AIRS</fullName>
    </alternativeName>
    <alternativeName>
        <fullName evidence="1">Phosphoribosyl-aminoimidazole synthetase</fullName>
    </alternativeName>
</protein>
<sequence length="337" mass="36973">MGFTYKDSGVDIDAADLSVQMIKRYARQTHIDGVLGDIGNFGAFFQLDGSLRQPVLVSGADGVGTKLKVAFMMDKHDTVGIDCVAMCVNDILVHGARPLFFLDYIAVGKLIPEKISQIVKGIAEGCTQAGCALIGGETAQMPDMYKEEEYDLAGFAVGVVEREKLLDGSKIKQRDAVIGLASSGLHSNGFSLVRKVLLGKMKVDEYISDLKKTLGEELLTPTKIYVRTVLDVLNDKIHGMAHITGGGLLENLPRILPEGLEFRIDKNSWEVPVIFKIIQRLGKIDSKEMYRTFNMGIGFVMVVERDEVENLLRKLNELGQNAWVIGDIVPGEKGVII</sequence>
<gene>
    <name evidence="1" type="primary">purM</name>
    <name type="ordered locus">Tlet_1911</name>
</gene>
<reference key="1">
    <citation type="submission" date="2007-08" db="EMBL/GenBank/DDBJ databases">
        <title>Complete sequence of Thermotoga lettingae TMO.</title>
        <authorList>
            <consortium name="US DOE Joint Genome Institute"/>
            <person name="Copeland A."/>
            <person name="Lucas S."/>
            <person name="Lapidus A."/>
            <person name="Barry K."/>
            <person name="Glavina del Rio T."/>
            <person name="Dalin E."/>
            <person name="Tice H."/>
            <person name="Pitluck S."/>
            <person name="Foster B."/>
            <person name="Bruce D."/>
            <person name="Schmutz J."/>
            <person name="Larimer F."/>
            <person name="Land M."/>
            <person name="Hauser L."/>
            <person name="Kyrpides N."/>
            <person name="Mikhailova N."/>
            <person name="Nelson K."/>
            <person name="Gogarten J.P."/>
            <person name="Noll K."/>
            <person name="Richardson P."/>
        </authorList>
    </citation>
    <scope>NUCLEOTIDE SEQUENCE [LARGE SCALE GENOMIC DNA]</scope>
    <source>
        <strain>ATCC BAA-301 / DSM 14385 / NBRC 107922 / TMO</strain>
    </source>
</reference>
<accession>A8F8I1</accession>
<feature type="chain" id="PRO_1000148306" description="Phosphoribosylformylglycinamidine cyclo-ligase">
    <location>
        <begin position="1"/>
        <end position="337"/>
    </location>
</feature>
<name>PUR5_PSELT</name>